<name>MAZE_STAS1</name>
<proteinExistence type="inferred from homology"/>
<sequence length="56" mass="6332">MASFNQSRIHNIEQLLKEGYSQMADLNLSLAAEAFPFECEACDCNEVYISSKNNNE</sequence>
<gene>
    <name type="primary">mazE</name>
    <name type="ordered locus">SSP0808</name>
</gene>
<organism>
    <name type="scientific">Staphylococcus saprophyticus subsp. saprophyticus (strain ATCC 15305 / DSM 20229 / NCIMB 8711 / NCTC 7292 / S-41)</name>
    <dbReference type="NCBI Taxonomy" id="342451"/>
    <lineage>
        <taxon>Bacteria</taxon>
        <taxon>Bacillati</taxon>
        <taxon>Bacillota</taxon>
        <taxon>Bacilli</taxon>
        <taxon>Bacillales</taxon>
        <taxon>Staphylococcaceae</taxon>
        <taxon>Staphylococcus</taxon>
    </lineage>
</organism>
<feature type="chain" id="PRO_0000330724" description="Antitoxin MazE">
    <location>
        <begin position="1"/>
        <end position="56"/>
    </location>
</feature>
<dbReference type="EMBL" id="AP008934">
    <property type="protein sequence ID" value="BAE17953.1"/>
    <property type="molecule type" value="Genomic_DNA"/>
</dbReference>
<dbReference type="RefSeq" id="WP_011302702.1">
    <property type="nucleotide sequence ID" value="NZ_MTGA01000032.1"/>
</dbReference>
<dbReference type="SMR" id="Q49Z23"/>
<dbReference type="GeneID" id="3615775"/>
<dbReference type="KEGG" id="ssp:SSP0808"/>
<dbReference type="PATRIC" id="fig|342451.11.peg.810"/>
<dbReference type="eggNOG" id="ENOG50305BV">
    <property type="taxonomic scope" value="Bacteria"/>
</dbReference>
<dbReference type="HOGENOM" id="CLU_3012108_0_0_9"/>
<dbReference type="OrthoDB" id="2418545at2"/>
<dbReference type="Proteomes" id="UP000006371">
    <property type="component" value="Chromosome"/>
</dbReference>
<dbReference type="GO" id="GO:0006355">
    <property type="term" value="P:regulation of DNA-templated transcription"/>
    <property type="evidence" value="ECO:0007669"/>
    <property type="project" value="InterPro"/>
</dbReference>
<dbReference type="Gene3D" id="1.10.1220.10">
    <property type="entry name" value="Met repressor-like"/>
    <property type="match status" value="1"/>
</dbReference>
<dbReference type="InterPro" id="IPR013321">
    <property type="entry name" value="Arc_rbn_hlx_hlx"/>
</dbReference>
<dbReference type="InterPro" id="IPR048242">
    <property type="entry name" value="MazE"/>
</dbReference>
<dbReference type="NCBIfam" id="NF041459">
    <property type="entry name" value="antitoxMazE_Staph"/>
    <property type="match status" value="1"/>
</dbReference>
<protein>
    <recommendedName>
        <fullName>Antitoxin MazE</fullName>
    </recommendedName>
</protein>
<keyword id="KW-1185">Reference proteome</keyword>
<keyword id="KW-1277">Toxin-antitoxin system</keyword>
<evidence type="ECO:0000250" key="1">
    <source>
        <dbReference type="UniProtKB" id="P0C7B4"/>
    </source>
</evidence>
<evidence type="ECO:0000305" key="2"/>
<accession>Q49Z23</accession>
<comment type="function">
    <text evidence="1">Antitoxin component of a type II toxin-antitoxin (TA) system. Labile antitoxin that binds to cognate MazF toxin and counteracts its endoribonuclease activity.</text>
</comment>
<comment type="subunit">
    <text evidence="1">Forms a complex with cognate toxin MazF which inhibits the endoribonuclease activity of MazF.</text>
</comment>
<comment type="similarity">
    <text evidence="2">Belongs to the MazE/EndoAI family.</text>
</comment>
<reference key="1">
    <citation type="journal article" date="2005" name="Proc. Natl. Acad. Sci. U.S.A.">
        <title>Whole genome sequence of Staphylococcus saprophyticus reveals the pathogenesis of uncomplicated urinary tract infection.</title>
        <authorList>
            <person name="Kuroda M."/>
            <person name="Yamashita A."/>
            <person name="Hirakawa H."/>
            <person name="Kumano M."/>
            <person name="Morikawa K."/>
            <person name="Higashide M."/>
            <person name="Maruyama A."/>
            <person name="Inose Y."/>
            <person name="Matoba K."/>
            <person name="Toh H."/>
            <person name="Kuhara S."/>
            <person name="Hattori M."/>
            <person name="Ohta T."/>
        </authorList>
    </citation>
    <scope>NUCLEOTIDE SEQUENCE [LARGE SCALE GENOMIC DNA]</scope>
    <source>
        <strain>ATCC 15305 / DSM 20229 / NCIMB 8711 / NCTC 7292 / S-41</strain>
    </source>
</reference>